<protein>
    <recommendedName>
        <fullName evidence="1">UPF0301 protein YqgE</fullName>
    </recommendedName>
</protein>
<comment type="similarity">
    <text evidence="1">Belongs to the UPF0301 (AlgH) family.</text>
</comment>
<feature type="chain" id="PRO_1000198270" description="UPF0301 protein YqgE">
    <location>
        <begin position="1"/>
        <end position="187"/>
    </location>
</feature>
<accession>B1LDF7</accession>
<name>YQGE_ECOSM</name>
<reference key="1">
    <citation type="journal article" date="2008" name="J. Bacteriol.">
        <title>Insights into the environmental resistance gene pool from the genome sequence of the multidrug-resistant environmental isolate Escherichia coli SMS-3-5.</title>
        <authorList>
            <person name="Fricke W.F."/>
            <person name="Wright M.S."/>
            <person name="Lindell A.H."/>
            <person name="Harkins D.M."/>
            <person name="Baker-Austin C."/>
            <person name="Ravel J."/>
            <person name="Stepanauskas R."/>
        </authorList>
    </citation>
    <scope>NUCLEOTIDE SEQUENCE [LARGE SCALE GENOMIC DNA]</scope>
    <source>
        <strain>SMS-3-5 / SECEC</strain>
    </source>
</reference>
<organism>
    <name type="scientific">Escherichia coli (strain SMS-3-5 / SECEC)</name>
    <dbReference type="NCBI Taxonomy" id="439855"/>
    <lineage>
        <taxon>Bacteria</taxon>
        <taxon>Pseudomonadati</taxon>
        <taxon>Pseudomonadota</taxon>
        <taxon>Gammaproteobacteria</taxon>
        <taxon>Enterobacterales</taxon>
        <taxon>Enterobacteriaceae</taxon>
        <taxon>Escherichia</taxon>
    </lineage>
</organism>
<sequence>MNLQHHFLIAMPALQDPIFRRSVVYICEHNTNGAMGIIVNKPLENLKIEGILEKLKITPEPRDESIRLDKPVMLGGPLAEDRGFILHTPPSNFASSIRISDNTVMTTSRDVLETLGTDKQPSDILVALGYASWEKGQLEQEILDNAWLTAPADLNILFKTPIADRWREAAKLIGVDILTMPGVAGHA</sequence>
<proteinExistence type="inferred from homology"/>
<evidence type="ECO:0000255" key="1">
    <source>
        <dbReference type="HAMAP-Rule" id="MF_00758"/>
    </source>
</evidence>
<gene>
    <name evidence="1" type="primary">yqgE</name>
    <name type="ordered locus">EcSMS35_3090</name>
</gene>
<dbReference type="EMBL" id="CP000970">
    <property type="protein sequence ID" value="ACB16561.1"/>
    <property type="molecule type" value="Genomic_DNA"/>
</dbReference>
<dbReference type="RefSeq" id="WP_001355636.1">
    <property type="nucleotide sequence ID" value="NC_010498.1"/>
</dbReference>
<dbReference type="SMR" id="B1LDF7"/>
<dbReference type="KEGG" id="ecm:EcSMS35_3090"/>
<dbReference type="HOGENOM" id="CLU_057596_1_0_6"/>
<dbReference type="Proteomes" id="UP000007011">
    <property type="component" value="Chromosome"/>
</dbReference>
<dbReference type="GO" id="GO:0005829">
    <property type="term" value="C:cytosol"/>
    <property type="evidence" value="ECO:0007669"/>
    <property type="project" value="TreeGrafter"/>
</dbReference>
<dbReference type="FunFam" id="3.30.70.1300:FF:000001">
    <property type="entry name" value="UPF0301 protein YqgE"/>
    <property type="match status" value="1"/>
</dbReference>
<dbReference type="Gene3D" id="3.40.1740.10">
    <property type="entry name" value="VC0467-like"/>
    <property type="match status" value="1"/>
</dbReference>
<dbReference type="Gene3D" id="3.30.70.1300">
    <property type="entry name" value="VC0467-like domains"/>
    <property type="match status" value="1"/>
</dbReference>
<dbReference type="HAMAP" id="MF_00758">
    <property type="entry name" value="UPF0301"/>
    <property type="match status" value="1"/>
</dbReference>
<dbReference type="InterPro" id="IPR003774">
    <property type="entry name" value="AlgH-like"/>
</dbReference>
<dbReference type="NCBIfam" id="NF001266">
    <property type="entry name" value="PRK00228.1-1"/>
    <property type="match status" value="1"/>
</dbReference>
<dbReference type="PANTHER" id="PTHR30327">
    <property type="entry name" value="UNCHARACTERIZED PROTEIN YQGE"/>
    <property type="match status" value="1"/>
</dbReference>
<dbReference type="PANTHER" id="PTHR30327:SF1">
    <property type="entry name" value="UPF0301 PROTEIN YQGE"/>
    <property type="match status" value="1"/>
</dbReference>
<dbReference type="Pfam" id="PF02622">
    <property type="entry name" value="DUF179"/>
    <property type="match status" value="1"/>
</dbReference>
<dbReference type="SUPFAM" id="SSF143456">
    <property type="entry name" value="VC0467-like"/>
    <property type="match status" value="1"/>
</dbReference>